<protein>
    <recommendedName>
        <fullName>Ribonucleoside-diphosphate reductase large subunit</fullName>
        <ecNumber>1.17.4.1</ecNumber>
    </recommendedName>
</protein>
<name>RIR1_OSHVF</name>
<proteinExistence type="inferred from homology"/>
<evidence type="ECO:0000250" key="1"/>
<evidence type="ECO:0000305" key="2"/>
<comment type="function">
    <text evidence="1">Ribonucleoside-diphosphate reductase holoenzyme provides the precursors necessary for viral DNA synthesis. Allows virus growth in non-dividing cells. Catalyzes the biosynthesis of deoxyribonucleotides from the corresponding ribonucleotides (By similarity).</text>
</comment>
<comment type="catalytic activity">
    <reaction>
        <text>a 2'-deoxyribonucleoside 5'-diphosphate + [thioredoxin]-disulfide + H2O = a ribonucleoside 5'-diphosphate + [thioredoxin]-dithiol</text>
        <dbReference type="Rhea" id="RHEA:23252"/>
        <dbReference type="Rhea" id="RHEA-COMP:10698"/>
        <dbReference type="Rhea" id="RHEA-COMP:10700"/>
        <dbReference type="ChEBI" id="CHEBI:15377"/>
        <dbReference type="ChEBI" id="CHEBI:29950"/>
        <dbReference type="ChEBI" id="CHEBI:50058"/>
        <dbReference type="ChEBI" id="CHEBI:57930"/>
        <dbReference type="ChEBI" id="CHEBI:73316"/>
        <dbReference type="EC" id="1.17.4.1"/>
    </reaction>
</comment>
<comment type="subunit">
    <text evidence="1">Heterotetramer composed of a homodimer of the large subunit (R1) and a homodimer of the small subunit (R2). Larger multisubunit protein complex are also active, composed of (R1)n(R2)n (By similarity).</text>
</comment>
<comment type="similarity">
    <text evidence="2">Belongs to the ribonucleoside diphosphate reductase large chain family.</text>
</comment>
<organismHost>
    <name type="scientific">Magallana gigas</name>
    <name type="common">Pacific oyster</name>
    <name type="synonym">Crassostrea gigas</name>
    <dbReference type="NCBI Taxonomy" id="29159"/>
</organismHost>
<organismHost>
    <name type="scientific">Pecten maximus</name>
    <name type="common">King scallop</name>
    <name type="synonym">Pilgrim's clam</name>
    <dbReference type="NCBI Taxonomy" id="6579"/>
</organismHost>
<sequence length="835" mass="93356">MACSMANAVRPGLSDLPEGVDLSNPKEVRSLLIKLTHARKSTVYDTKIRRLHGVIVNSIMENYNSAEGELDMAITPLIPSHPDYAFLAGRVSAYMTQINTPKTFTDAVYGIQMAVGETNGFRSPMKPVKGGLSDEIVDFVNEHGARLDGMIDDVRDYSHNYMGITGLLNGVAIKVNKKLYERPQYVFMRVAMAMTDLSSETALEDIWQTYMLISGQCLSMASPVLFNGGTSSSNTASCFLLDMGDNMVSITKKVAQTMTLIAKNGGIGINFSKLRATGSKIGMAGKSSGIGGKLNLFDRVAQSVDQGENKRPGAIAGYLTDWHADMYDWLYSRYSGSGNEVNKRHVLNMGLVMSDLFMERVENDKEWSLFSPNDVVGLEELYGEKFVRAYRAHEANPKIKRTTVSARKLFSDIANMMWSTGEPYILFKDAVNERSNHKHLGTIKNSNLCCEIVQYCDTNEIAVCNLATICVSNFVNVETGEIDFEGIADAAGVACKGINNLIDKQNYDLGNEQLMRLADERTEEVVEVNGIKFDAKYNLVSYSNLKHRPQGIGMQGLHDVFMKLKIPYDSEMAFRLAALIQEAIYYGAVRESVKIAEEKGPYPSYYWDNNTHREGKLQFDFLEGFDRDRDLTHELFNWREVLKKFEKFGINNSVVTAQPPSASSSQLNDNVESIEAITSNRFTKGIKDGKFIIINKHLQKDLEDLGMWDAQMVGDIEANDGSIQNIERIPKNIREIYKTAREIDHKAVVKICAAIQPFIDQTISKNMFVPKNVDNPVQLIMENVILGHKMKLKTGMYYTRGIPAMKQQNFGKMNFQDKDIGKPVPELVDCEACSA</sequence>
<feature type="chain" id="PRO_0000385023" description="Ribonucleoside-diphosphate reductase large subunit">
    <location>
        <begin position="1"/>
        <end position="835"/>
    </location>
</feature>
<feature type="active site" description="Proton acceptor" evidence="1">
    <location>
        <position position="447"/>
    </location>
</feature>
<feature type="active site" description="Cysteine radical intermediate" evidence="1">
    <location>
        <position position="449"/>
    </location>
</feature>
<feature type="active site" description="Proton acceptor" evidence="1">
    <location>
        <position position="451"/>
    </location>
</feature>
<feature type="binding site" evidence="1">
    <location>
        <position position="222"/>
    </location>
    <ligand>
        <name>substrate</name>
    </ligand>
</feature>
<feature type="binding site" evidence="1">
    <location>
        <begin position="237"/>
        <end position="238"/>
    </location>
    <ligand>
        <name>substrate</name>
    </ligand>
</feature>
<feature type="binding site" evidence="1">
    <location>
        <position position="266"/>
    </location>
    <ligand>
        <name>substrate</name>
    </ligand>
</feature>
<feature type="binding site" evidence="1">
    <location>
        <begin position="447"/>
        <end position="451"/>
    </location>
    <ligand>
        <name>substrate</name>
    </ligand>
</feature>
<feature type="binding site" evidence="1">
    <location>
        <begin position="660"/>
        <end position="664"/>
    </location>
    <ligand>
        <name>substrate</name>
    </ligand>
</feature>
<feature type="site" description="Important for hydrogen atom transfer" evidence="1">
    <location>
        <position position="238"/>
    </location>
</feature>
<feature type="site" description="Important for hydrogen atom transfer" evidence="1">
    <location>
        <position position="464"/>
    </location>
</feature>
<feature type="site" description="Important for electron transfer" evidence="1">
    <location>
        <position position="797"/>
    </location>
</feature>
<feature type="site" description="Important for electron transfer" evidence="1">
    <location>
        <position position="798"/>
    </location>
</feature>
<feature type="site" description="Interacts with thioredoxin/glutaredoxin" evidence="1">
    <location>
        <position position="830"/>
    </location>
</feature>
<feature type="site" description="Interacts with thioredoxin/glutaredoxin" evidence="1">
    <location>
        <position position="833"/>
    </location>
</feature>
<feature type="disulfide bond" description="Redox-active" evidence="1">
    <location>
        <begin position="238"/>
        <end position="464"/>
    </location>
</feature>
<keyword id="KW-0215">Deoxyribonucleotide synthesis</keyword>
<keyword id="KW-1015">Disulfide bond</keyword>
<keyword id="KW-0560">Oxidoreductase</keyword>
<keyword id="KW-1185">Reference proteome</keyword>
<organism>
    <name type="scientific">Ostreid herpesvirus 1 (isolate France)</name>
    <name type="common">OsHV-1</name>
    <name type="synonym">Pacific oyster herpesvirus</name>
    <dbReference type="NCBI Taxonomy" id="654903"/>
    <lineage>
        <taxon>Viruses</taxon>
        <taxon>Duplodnaviria</taxon>
        <taxon>Heunggongvirae</taxon>
        <taxon>Peploviricota</taxon>
        <taxon>Herviviricetes</taxon>
        <taxon>Herpesvirales</taxon>
        <taxon>Malacoherpesviridae</taxon>
        <taxon>Ostreavirus</taxon>
        <taxon>Ostreavirus ostreidmalaco1</taxon>
        <taxon>Ostreid herpesvirus 1</taxon>
    </lineage>
</organism>
<reference key="1">
    <citation type="journal article" date="2005" name="J. Gen. Virol.">
        <title>A novel class of herpesvirus with bivalve hosts.</title>
        <authorList>
            <person name="Davison A.J."/>
            <person name="Trus B.L."/>
            <person name="Cheng N."/>
            <person name="Steven A.C."/>
            <person name="Watson M.S."/>
            <person name="Cunningham C."/>
            <person name="Le Deuff R.M."/>
            <person name="Renault T."/>
        </authorList>
    </citation>
    <scope>NUCLEOTIDE SEQUENCE [LARGE SCALE GENOMIC DNA]</scope>
</reference>
<reference key="2">
    <citation type="journal article" date="2009" name="Trends Biochem. Sci.">
        <title>Tinkering with a viral ribonucleotide reductase.</title>
        <authorList>
            <person name="Lembo D."/>
            <person name="Brune W."/>
        </authorList>
    </citation>
    <scope>REVIEW</scope>
</reference>
<accession>Q6R7H4</accession>
<dbReference type="EC" id="1.17.4.1"/>
<dbReference type="EMBL" id="AY509253">
    <property type="protein sequence ID" value="AAS00941.1"/>
    <property type="molecule type" value="Genomic_DNA"/>
</dbReference>
<dbReference type="RefSeq" id="YP_024594.1">
    <property type="nucleotide sequence ID" value="NC_005881.2"/>
</dbReference>
<dbReference type="SMR" id="Q6R7H4"/>
<dbReference type="GeneID" id="2948194"/>
<dbReference type="KEGG" id="vg:2948194"/>
<dbReference type="Proteomes" id="UP000007021">
    <property type="component" value="Segment"/>
</dbReference>
<dbReference type="GO" id="GO:0005524">
    <property type="term" value="F:ATP binding"/>
    <property type="evidence" value="ECO:0007669"/>
    <property type="project" value="InterPro"/>
</dbReference>
<dbReference type="GO" id="GO:0004748">
    <property type="term" value="F:ribonucleoside-diphosphate reductase activity, thioredoxin disulfide as acceptor"/>
    <property type="evidence" value="ECO:0007669"/>
    <property type="project" value="UniProtKB-EC"/>
</dbReference>
<dbReference type="GO" id="GO:0009263">
    <property type="term" value="P:deoxyribonucleotide biosynthetic process"/>
    <property type="evidence" value="ECO:0007669"/>
    <property type="project" value="UniProtKB-KW"/>
</dbReference>
<dbReference type="Gene3D" id="3.20.70.20">
    <property type="match status" value="1"/>
</dbReference>
<dbReference type="InterPro" id="IPR013346">
    <property type="entry name" value="NrdE_NrdA_C"/>
</dbReference>
<dbReference type="InterPro" id="IPR000788">
    <property type="entry name" value="RNR_lg_C"/>
</dbReference>
<dbReference type="InterPro" id="IPR013509">
    <property type="entry name" value="RNR_lsu_N"/>
</dbReference>
<dbReference type="InterPro" id="IPR008926">
    <property type="entry name" value="RNR_R1-su_N"/>
</dbReference>
<dbReference type="InterPro" id="IPR039718">
    <property type="entry name" value="Rrm1"/>
</dbReference>
<dbReference type="NCBIfam" id="TIGR02506">
    <property type="entry name" value="NrdE_NrdA"/>
    <property type="match status" value="1"/>
</dbReference>
<dbReference type="PANTHER" id="PTHR11573">
    <property type="entry name" value="RIBONUCLEOSIDE-DIPHOSPHATE REDUCTASE LARGE CHAIN"/>
    <property type="match status" value="1"/>
</dbReference>
<dbReference type="PANTHER" id="PTHR11573:SF6">
    <property type="entry name" value="RIBONUCLEOSIDE-DIPHOSPHATE REDUCTASE LARGE SUBUNIT"/>
    <property type="match status" value="1"/>
</dbReference>
<dbReference type="Pfam" id="PF02867">
    <property type="entry name" value="Ribonuc_red_lgC"/>
    <property type="match status" value="1"/>
</dbReference>
<dbReference type="Pfam" id="PF00317">
    <property type="entry name" value="Ribonuc_red_lgN"/>
    <property type="match status" value="1"/>
</dbReference>
<dbReference type="PRINTS" id="PR01183">
    <property type="entry name" value="RIBORDTASEM1"/>
</dbReference>
<dbReference type="SUPFAM" id="SSF51998">
    <property type="entry name" value="PFL-like glycyl radical enzymes"/>
    <property type="match status" value="1"/>
</dbReference>
<dbReference type="SUPFAM" id="SSF48168">
    <property type="entry name" value="R1 subunit of ribonucleotide reductase, N-terminal domain"/>
    <property type="match status" value="1"/>
</dbReference>